<evidence type="ECO:0000255" key="1">
    <source>
        <dbReference type="PROSITE-ProRule" id="PRU00257"/>
    </source>
</evidence>
<accession>P44030</accession>
<protein>
    <recommendedName>
        <fullName>Uncharacterized HTH-type transcriptional regulator HI_0659</fullName>
    </recommendedName>
</protein>
<keyword id="KW-0238">DNA-binding</keyword>
<keyword id="KW-1185">Reference proteome</keyword>
<keyword id="KW-0804">Transcription</keyword>
<keyword id="KW-0805">Transcription regulation</keyword>
<sequence>MNKISPLGSNWNEFEQQIFNEEEIRESNLRVALIKELITSRQQLGISQKQLETLSGVKQPMIARIEKGQTNPQLETLLKLLAPLGKTLSIVPLRVKNA</sequence>
<feature type="chain" id="PRO_0000149769" description="Uncharacterized HTH-type transcriptional regulator HI_0659">
    <location>
        <begin position="1"/>
        <end position="98"/>
    </location>
</feature>
<feature type="domain" description="HTH cro/C1-type" evidence="1">
    <location>
        <begin position="37"/>
        <end position="91"/>
    </location>
</feature>
<feature type="DNA-binding region" description="H-T-H motif" evidence="1">
    <location>
        <begin position="48"/>
        <end position="67"/>
    </location>
</feature>
<dbReference type="EMBL" id="L42023">
    <property type="protein sequence ID" value="AAC22323.1"/>
    <property type="molecule type" value="Genomic_DNA"/>
</dbReference>
<dbReference type="PIR" id="C64011">
    <property type="entry name" value="C64011"/>
</dbReference>
<dbReference type="RefSeq" id="NP_438819.1">
    <property type="nucleotide sequence ID" value="NC_000907.1"/>
</dbReference>
<dbReference type="SMR" id="P44030"/>
<dbReference type="STRING" id="71421.HI_0659"/>
<dbReference type="EnsemblBacteria" id="AAC22323">
    <property type="protein sequence ID" value="AAC22323"/>
    <property type="gene ID" value="HI_0659"/>
</dbReference>
<dbReference type="KEGG" id="hin:HI_0659"/>
<dbReference type="PATRIC" id="fig|71421.8.peg.688"/>
<dbReference type="eggNOG" id="COG3620">
    <property type="taxonomic scope" value="Bacteria"/>
</dbReference>
<dbReference type="HOGENOM" id="CLU_066192_18_4_6"/>
<dbReference type="OrthoDB" id="9792093at2"/>
<dbReference type="PhylomeDB" id="P44030"/>
<dbReference type="BioCyc" id="HINF71421:G1GJ1-694-MONOMER"/>
<dbReference type="Proteomes" id="UP000000579">
    <property type="component" value="Chromosome"/>
</dbReference>
<dbReference type="GO" id="GO:0003677">
    <property type="term" value="F:DNA binding"/>
    <property type="evidence" value="ECO:0007669"/>
    <property type="project" value="UniProtKB-KW"/>
</dbReference>
<dbReference type="CDD" id="cd00093">
    <property type="entry name" value="HTH_XRE"/>
    <property type="match status" value="1"/>
</dbReference>
<dbReference type="Gene3D" id="1.10.260.40">
    <property type="entry name" value="lambda repressor-like DNA-binding domains"/>
    <property type="match status" value="1"/>
</dbReference>
<dbReference type="InterPro" id="IPR001387">
    <property type="entry name" value="Cro/C1-type_HTH"/>
</dbReference>
<dbReference type="InterPro" id="IPR010982">
    <property type="entry name" value="Lambda_DNA-bd_dom_sf"/>
</dbReference>
<dbReference type="Pfam" id="PF01381">
    <property type="entry name" value="HTH_3"/>
    <property type="match status" value="1"/>
</dbReference>
<dbReference type="SMART" id="SM00530">
    <property type="entry name" value="HTH_XRE"/>
    <property type="match status" value="1"/>
</dbReference>
<dbReference type="SUPFAM" id="SSF47413">
    <property type="entry name" value="lambda repressor-like DNA-binding domains"/>
    <property type="match status" value="1"/>
</dbReference>
<dbReference type="PROSITE" id="PS50943">
    <property type="entry name" value="HTH_CROC1"/>
    <property type="match status" value="1"/>
</dbReference>
<proteinExistence type="predicted"/>
<reference key="1">
    <citation type="journal article" date="1995" name="Science">
        <title>Whole-genome random sequencing and assembly of Haemophilus influenzae Rd.</title>
        <authorList>
            <person name="Fleischmann R.D."/>
            <person name="Adams M.D."/>
            <person name="White O."/>
            <person name="Clayton R.A."/>
            <person name="Kirkness E.F."/>
            <person name="Kerlavage A.R."/>
            <person name="Bult C.J."/>
            <person name="Tomb J.-F."/>
            <person name="Dougherty B.A."/>
            <person name="Merrick J.M."/>
            <person name="McKenney K."/>
            <person name="Sutton G.G."/>
            <person name="FitzHugh W."/>
            <person name="Fields C.A."/>
            <person name="Gocayne J.D."/>
            <person name="Scott J.D."/>
            <person name="Shirley R."/>
            <person name="Liu L.-I."/>
            <person name="Glodek A."/>
            <person name="Kelley J.M."/>
            <person name="Weidman J.F."/>
            <person name="Phillips C.A."/>
            <person name="Spriggs T."/>
            <person name="Hedblom E."/>
            <person name="Cotton M.D."/>
            <person name="Utterback T.R."/>
            <person name="Hanna M.C."/>
            <person name="Nguyen D.T."/>
            <person name="Saudek D.M."/>
            <person name="Brandon R.C."/>
            <person name="Fine L.D."/>
            <person name="Fritchman J.L."/>
            <person name="Fuhrmann J.L."/>
            <person name="Geoghagen N.S.M."/>
            <person name="Gnehm C.L."/>
            <person name="McDonald L.A."/>
            <person name="Small K.V."/>
            <person name="Fraser C.M."/>
            <person name="Smith H.O."/>
            <person name="Venter J.C."/>
        </authorList>
    </citation>
    <scope>NUCLEOTIDE SEQUENCE [LARGE SCALE GENOMIC DNA]</scope>
    <source>
        <strain>ATCC 51907 / DSM 11121 / KW20 / Rd</strain>
    </source>
</reference>
<organism>
    <name type="scientific">Haemophilus influenzae (strain ATCC 51907 / DSM 11121 / KW20 / Rd)</name>
    <dbReference type="NCBI Taxonomy" id="71421"/>
    <lineage>
        <taxon>Bacteria</taxon>
        <taxon>Pseudomonadati</taxon>
        <taxon>Pseudomonadota</taxon>
        <taxon>Gammaproteobacteria</taxon>
        <taxon>Pasteurellales</taxon>
        <taxon>Pasteurellaceae</taxon>
        <taxon>Haemophilus</taxon>
    </lineage>
</organism>
<gene>
    <name type="ordered locus">HI_0659</name>
</gene>
<name>Y659_HAEIN</name>